<reference key="1">
    <citation type="journal article" date="1995" name="Virology">
        <title>Identification, sequence, and transcriptional analysis of lef-3, a gene essential for Orgyia pseudotsugata baculovirus DNA replication.</title>
        <authorList>
            <person name="Ahrens C.H."/>
            <person name="Carlson C."/>
            <person name="Rohrmann G.F."/>
        </authorList>
    </citation>
    <scope>NUCLEOTIDE SEQUENCE [GENOMIC DNA]</scope>
</reference>
<reference key="2">
    <citation type="journal article" date="1997" name="Virology">
        <title>The sequence of the Orgyia pseudotsugata multinucleocapsid nuclear polyhedrosis virus genome.</title>
        <authorList>
            <person name="Ahrens C.H."/>
            <person name="Russell R.R."/>
            <person name="Funk C.J."/>
            <person name="Evans J."/>
            <person name="Harwood S."/>
            <person name="Rohrmann G.F."/>
        </authorList>
    </citation>
    <scope>NUCLEOTIDE SEQUENCE [LARGE SCALE GENOMIC DNA]</scope>
</reference>
<protein>
    <recommendedName>
        <fullName>Uncharacterized 15.4 kDa protein</fullName>
    </recommendedName>
    <alternativeName>
        <fullName>ORF73</fullName>
    </alternativeName>
</protein>
<sequence length="131" mass="15367">MWDTVRWQVLSSDEVEVAPDHRALAWRELIANVARDTPLDYTFRTMLQRADLENFDYNTPIVYNVKRKELIVLNERMRAALQRPVRRSDRTINANTAHVFLLFILAVLLTVLVAFSPWPDTRRVTAETRTI</sequence>
<name>Y068_NPVOP</name>
<organism>
    <name type="scientific">Orgyia pseudotsugata multicapsid polyhedrosis virus</name>
    <name type="common">OpMNPV</name>
    <dbReference type="NCBI Taxonomy" id="262177"/>
    <lineage>
        <taxon>Viruses</taxon>
        <taxon>Viruses incertae sedis</taxon>
        <taxon>Naldaviricetes</taxon>
        <taxon>Lefavirales</taxon>
        <taxon>Baculoviridae</taxon>
        <taxon>Alphabaculovirus</taxon>
        <taxon>Alphabaculovirus orpseudotsugatae</taxon>
    </lineage>
</organism>
<accession>Q65366</accession>
<accession>O12556</accession>
<accession>O12845</accession>
<keyword id="KW-1185">Reference proteome</keyword>
<dbReference type="EMBL" id="D45397">
    <property type="protein sequence ID" value="BAA08238.1"/>
    <property type="molecule type" value="Genomic_DNA"/>
</dbReference>
<dbReference type="EMBL" id="U75930">
    <property type="protein sequence ID" value="AAC59072.1"/>
    <property type="molecule type" value="Genomic_DNA"/>
</dbReference>
<dbReference type="RefSeq" id="NP_046229.1">
    <property type="nucleotide sequence ID" value="NC_001875.2"/>
</dbReference>
<dbReference type="SMR" id="Q65366"/>
<dbReference type="KEGG" id="vg:911980"/>
<dbReference type="OrthoDB" id="18095at10239"/>
<dbReference type="Proteomes" id="UP000009248">
    <property type="component" value="Genome"/>
</dbReference>
<dbReference type="InterPro" id="IPR008005">
    <property type="entry name" value="PIF6"/>
</dbReference>
<dbReference type="Pfam" id="PF05341">
    <property type="entry name" value="PIF6"/>
    <property type="match status" value="1"/>
</dbReference>
<gene>
    <name type="ORF">ORF73</name>
</gene>
<feature type="chain" id="PRO_0000133007" description="Uncharacterized 15.4 kDa protein">
    <location>
        <begin position="1"/>
        <end position="131"/>
    </location>
</feature>
<organismHost>
    <name type="scientific">Orgyia pseudotsugata</name>
    <name type="common">Douglas-fir tussock moth</name>
    <dbReference type="NCBI Taxonomy" id="33414"/>
</organismHost>
<proteinExistence type="predicted"/>